<proteinExistence type="inferred from homology"/>
<sequence>MPQLDTSTWFITILATILTLFIIMQLKISTYYYHSNPEPKTTKMTKSLIPWEIKWTKIYSPLSLPLR</sequence>
<comment type="function">
    <text evidence="1">Mitochondrial membrane ATP synthase (F(1)F(0) ATP synthase or Complex V) produces ATP from ADP in the presence of a proton gradient across the membrane which is generated by electron transport complexes of the respiratory chain. F-type ATPases consist of two structural domains, F(1) - containing the extramembraneous catalytic core and F(0) - containing the membrane proton channel, linked together by a central stalk and a peripheral stalk. During catalysis, ATP synthesis in the catalytic domain of F(1) is coupled via a rotary mechanism of the central stalk subunits to proton translocation. Part of the complex F(0) domain. Minor subunit located with subunit a in the membrane (By similarity).</text>
</comment>
<comment type="subunit">
    <text evidence="2">F-type ATPases have 2 components, CF(1) - the catalytic core - and CF(0) - the membrane proton channel. Component of an ATP synthase complex composed of ATP5PB, ATP5MC1, ATP5F1E, ATP5PD, ATP5ME, ATP5PF, ATP5MF, MT-ATP6, MT-ATP8, ATP5F1A, ATP5F1B, ATP5F1D, ATP5F1C, ATP5PO, ATP5MG, ATP5MK and ATP5MJ (By similarity). Interacts with PRICKLE3 (By similarity).</text>
</comment>
<comment type="subcellular location">
    <subcellularLocation>
        <location>Mitochondrion membrane</location>
        <topology>Single-pass membrane protein</topology>
    </subcellularLocation>
</comment>
<comment type="similarity">
    <text evidence="5">Belongs to the ATPase protein 8 family.</text>
</comment>
<keyword id="KW-0007">Acetylation</keyword>
<keyword id="KW-0066">ATP synthesis</keyword>
<keyword id="KW-0138">CF(0)</keyword>
<keyword id="KW-0375">Hydrogen ion transport</keyword>
<keyword id="KW-0406">Ion transport</keyword>
<keyword id="KW-0472">Membrane</keyword>
<keyword id="KW-0496">Mitochondrion</keyword>
<keyword id="KW-0812">Transmembrane</keyword>
<keyword id="KW-1133">Transmembrane helix</keyword>
<keyword id="KW-0813">Transport</keyword>
<geneLocation type="mitochondrion"/>
<feature type="chain" id="PRO_0000195488" description="ATP synthase protein 8">
    <location>
        <begin position="1"/>
        <end position="67"/>
    </location>
</feature>
<feature type="transmembrane region" description="Helical" evidence="4">
    <location>
        <begin position="8"/>
        <end position="24"/>
    </location>
</feature>
<feature type="modified residue" description="N6-acetyllysine; alternate" evidence="3">
    <location>
        <position position="54"/>
    </location>
</feature>
<feature type="modified residue" description="N6-succinyllysine; alternate" evidence="3">
    <location>
        <position position="54"/>
    </location>
</feature>
<feature type="modified residue" description="N6-acetyllysine" evidence="3">
    <location>
        <position position="57"/>
    </location>
</feature>
<organism>
    <name type="scientific">Artibeus jamaicensis</name>
    <name type="common">Jamaican fruit-eating bat</name>
    <dbReference type="NCBI Taxonomy" id="9417"/>
    <lineage>
        <taxon>Eukaryota</taxon>
        <taxon>Metazoa</taxon>
        <taxon>Chordata</taxon>
        <taxon>Craniata</taxon>
        <taxon>Vertebrata</taxon>
        <taxon>Euteleostomi</taxon>
        <taxon>Mammalia</taxon>
        <taxon>Eutheria</taxon>
        <taxon>Laurasiatheria</taxon>
        <taxon>Chiroptera</taxon>
        <taxon>Yangochiroptera</taxon>
        <taxon>Phyllostomidae</taxon>
        <taxon>Stenodermatinae</taxon>
        <taxon>Artibeus</taxon>
    </lineage>
</organism>
<accession>O99598</accession>
<dbReference type="EMBL" id="AF061340">
    <property type="protein sequence ID" value="AAD05442.1"/>
    <property type="molecule type" value="Genomic_DNA"/>
</dbReference>
<dbReference type="PIR" id="T11144">
    <property type="entry name" value="T11144"/>
</dbReference>
<dbReference type="RefSeq" id="NP_008488.1">
    <property type="nucleotide sequence ID" value="NC_002009.1"/>
</dbReference>
<dbReference type="SMR" id="O99598"/>
<dbReference type="GeneID" id="808344"/>
<dbReference type="KEGG" id="ajm:808344"/>
<dbReference type="CTD" id="4509"/>
<dbReference type="OrthoDB" id="9835073at2759"/>
<dbReference type="GO" id="GO:0031966">
    <property type="term" value="C:mitochondrial membrane"/>
    <property type="evidence" value="ECO:0007669"/>
    <property type="project" value="UniProtKB-SubCell"/>
</dbReference>
<dbReference type="GO" id="GO:0045259">
    <property type="term" value="C:proton-transporting ATP synthase complex"/>
    <property type="evidence" value="ECO:0000250"/>
    <property type="project" value="UniProtKB"/>
</dbReference>
<dbReference type="GO" id="GO:0015078">
    <property type="term" value="F:proton transmembrane transporter activity"/>
    <property type="evidence" value="ECO:0007669"/>
    <property type="project" value="InterPro"/>
</dbReference>
<dbReference type="GO" id="GO:0015986">
    <property type="term" value="P:proton motive force-driven ATP synthesis"/>
    <property type="evidence" value="ECO:0007669"/>
    <property type="project" value="InterPro"/>
</dbReference>
<dbReference type="InterPro" id="IPR039017">
    <property type="entry name" value="ATP8_mammal"/>
</dbReference>
<dbReference type="InterPro" id="IPR001421">
    <property type="entry name" value="ATP8_metazoa"/>
</dbReference>
<dbReference type="PANTHER" id="PTHR13722">
    <property type="entry name" value="ATP SYNTHASE PROTEIN 8"/>
    <property type="match status" value="1"/>
</dbReference>
<dbReference type="PANTHER" id="PTHR13722:SF0">
    <property type="entry name" value="ATP SYNTHASE PROTEIN 8"/>
    <property type="match status" value="1"/>
</dbReference>
<dbReference type="Pfam" id="PF00895">
    <property type="entry name" value="ATP-synt_8"/>
    <property type="match status" value="1"/>
</dbReference>
<name>ATP8_ARTJA</name>
<gene>
    <name type="primary">MT-ATP8</name>
    <name type="synonym">ATP8</name>
    <name type="synonym">ATPASE8</name>
    <name type="synonym">MTATP8</name>
</gene>
<evidence type="ECO:0000250" key="1"/>
<evidence type="ECO:0000250" key="2">
    <source>
        <dbReference type="UniProtKB" id="P03928"/>
    </source>
</evidence>
<evidence type="ECO:0000250" key="3">
    <source>
        <dbReference type="UniProtKB" id="P03930"/>
    </source>
</evidence>
<evidence type="ECO:0000255" key="4"/>
<evidence type="ECO:0000305" key="5"/>
<protein>
    <recommendedName>
        <fullName>ATP synthase protein 8</fullName>
    </recommendedName>
    <alternativeName>
        <fullName>A6L</fullName>
    </alternativeName>
    <alternativeName>
        <fullName>F-ATPase subunit 8</fullName>
    </alternativeName>
</protein>
<reference key="1">
    <citation type="journal article" date="1998" name="J. Mol. Evol.">
        <title>Complete mitochondrial genome of a neotropical fruit bat, Artibeus jamaicensis, and a new hypothesis of the relationships of bats to other eutherian mammals.</title>
        <authorList>
            <person name="Pumo D.E."/>
            <person name="Finamore P.S."/>
            <person name="Franek W.R."/>
            <person name="Phillips C.J."/>
            <person name="Tarzami S."/>
            <person name="Balzarano D."/>
        </authorList>
    </citation>
    <scope>NUCLEOTIDE SEQUENCE [GENOMIC DNA]</scope>
</reference>